<keyword id="KW-0067">ATP-binding</keyword>
<keyword id="KW-0143">Chaperone</keyword>
<keyword id="KW-0963">Cytoplasm</keyword>
<keyword id="KW-0547">Nucleotide-binding</keyword>
<sequence length="467" mass="52299">MDTAGIRLTPKEIVSKLNEYIVGQNDAKRKVAIALRNRYRRSLLDEESKQEISPKNILMIGPTGVGKTEIARRMAKVVGAPFIKVEATKFTEVGYVGRDVESMVRDLVDVSVRLVKAQKKSLVQDEATAKANEKLVKLLVPSMKKKASQTNNPLESLFGGAIPNFGQNNEDEEEPPTEEIKTKRSEIKRQLEEGKLEKEKVRIKVEQDPGALGMLGTNQNQQMQEMMNQLMPKKKVEREVAVETARKILADSYADELIDQESANQEALELAEQMGIIFIDEIDKVATNNHNSGQDVSRQGVQRDILPILEGSVIQTKYGTVNTEHMLFIGAGAFHVSKPSDLIPELQGRFPIRVELDSLAVEDFVRILTEPKLSLIKQYEALLQTEEVTVNFTDEAITRLAEIAYQVNQDTDNIGARRLHTILEKMLEDLSFEAPSMPNAVVDITPQYVDDKLKSISTNKDLSAFIL</sequence>
<feature type="chain" id="PRO_0000160550" description="ATP-dependent protease ATPase subunit HslU">
    <location>
        <begin position="1"/>
        <end position="467"/>
    </location>
</feature>
<feature type="region of interest" description="Disordered" evidence="2">
    <location>
        <begin position="149"/>
        <end position="192"/>
    </location>
</feature>
<feature type="compositionally biased region" description="Basic and acidic residues" evidence="2">
    <location>
        <begin position="178"/>
        <end position="192"/>
    </location>
</feature>
<feature type="binding site" evidence="1">
    <location>
        <position position="22"/>
    </location>
    <ligand>
        <name>ATP</name>
        <dbReference type="ChEBI" id="CHEBI:30616"/>
    </ligand>
</feature>
<feature type="binding site" evidence="1">
    <location>
        <begin position="64"/>
        <end position="69"/>
    </location>
    <ligand>
        <name>ATP</name>
        <dbReference type="ChEBI" id="CHEBI:30616"/>
    </ligand>
</feature>
<feature type="binding site" evidence="1">
    <location>
        <position position="280"/>
    </location>
    <ligand>
        <name>ATP</name>
        <dbReference type="ChEBI" id="CHEBI:30616"/>
    </ligand>
</feature>
<feature type="binding site" evidence="1">
    <location>
        <position position="345"/>
    </location>
    <ligand>
        <name>ATP</name>
        <dbReference type="ChEBI" id="CHEBI:30616"/>
    </ligand>
</feature>
<feature type="binding site" evidence="1">
    <location>
        <position position="417"/>
    </location>
    <ligand>
        <name>ATP</name>
        <dbReference type="ChEBI" id="CHEBI:30616"/>
    </ligand>
</feature>
<dbReference type="EMBL" id="BX571856">
    <property type="protein sequence ID" value="CAG40232.1"/>
    <property type="molecule type" value="Genomic_DNA"/>
</dbReference>
<dbReference type="RefSeq" id="WP_000379051.1">
    <property type="nucleotide sequence ID" value="NC_002952.2"/>
</dbReference>
<dbReference type="SMR" id="Q6GHI1"/>
<dbReference type="KEGG" id="sar:SAR1230"/>
<dbReference type="HOGENOM" id="CLU_033123_0_0_9"/>
<dbReference type="Proteomes" id="UP000000596">
    <property type="component" value="Chromosome"/>
</dbReference>
<dbReference type="GO" id="GO:0009376">
    <property type="term" value="C:HslUV protease complex"/>
    <property type="evidence" value="ECO:0007669"/>
    <property type="project" value="UniProtKB-UniRule"/>
</dbReference>
<dbReference type="GO" id="GO:0005524">
    <property type="term" value="F:ATP binding"/>
    <property type="evidence" value="ECO:0007669"/>
    <property type="project" value="UniProtKB-UniRule"/>
</dbReference>
<dbReference type="GO" id="GO:0016887">
    <property type="term" value="F:ATP hydrolysis activity"/>
    <property type="evidence" value="ECO:0007669"/>
    <property type="project" value="InterPro"/>
</dbReference>
<dbReference type="GO" id="GO:0008233">
    <property type="term" value="F:peptidase activity"/>
    <property type="evidence" value="ECO:0007669"/>
    <property type="project" value="InterPro"/>
</dbReference>
<dbReference type="GO" id="GO:0036402">
    <property type="term" value="F:proteasome-activating activity"/>
    <property type="evidence" value="ECO:0007669"/>
    <property type="project" value="UniProtKB-UniRule"/>
</dbReference>
<dbReference type="GO" id="GO:0043335">
    <property type="term" value="P:protein unfolding"/>
    <property type="evidence" value="ECO:0007669"/>
    <property type="project" value="UniProtKB-UniRule"/>
</dbReference>
<dbReference type="GO" id="GO:0051603">
    <property type="term" value="P:proteolysis involved in protein catabolic process"/>
    <property type="evidence" value="ECO:0007669"/>
    <property type="project" value="TreeGrafter"/>
</dbReference>
<dbReference type="CDD" id="cd19498">
    <property type="entry name" value="RecA-like_HslU"/>
    <property type="match status" value="1"/>
</dbReference>
<dbReference type="FunFam" id="3.40.50.300:FF:000220">
    <property type="entry name" value="ATP-dependent protease ATPase subunit HslU"/>
    <property type="match status" value="1"/>
</dbReference>
<dbReference type="Gene3D" id="1.10.8.60">
    <property type="match status" value="1"/>
</dbReference>
<dbReference type="Gene3D" id="1.10.8.10">
    <property type="entry name" value="DNA helicase RuvA subunit, C-terminal domain"/>
    <property type="match status" value="1"/>
</dbReference>
<dbReference type="Gene3D" id="3.40.50.300">
    <property type="entry name" value="P-loop containing nucleotide triphosphate hydrolases"/>
    <property type="match status" value="2"/>
</dbReference>
<dbReference type="HAMAP" id="MF_00249">
    <property type="entry name" value="HslU"/>
    <property type="match status" value="1"/>
</dbReference>
<dbReference type="InterPro" id="IPR003593">
    <property type="entry name" value="AAA+_ATPase"/>
</dbReference>
<dbReference type="InterPro" id="IPR050052">
    <property type="entry name" value="ATP-dep_Clp_protease_ClpX"/>
</dbReference>
<dbReference type="InterPro" id="IPR003959">
    <property type="entry name" value="ATPase_AAA_core"/>
</dbReference>
<dbReference type="InterPro" id="IPR019489">
    <property type="entry name" value="Clp_ATPase_C"/>
</dbReference>
<dbReference type="InterPro" id="IPR004491">
    <property type="entry name" value="HslU"/>
</dbReference>
<dbReference type="InterPro" id="IPR027417">
    <property type="entry name" value="P-loop_NTPase"/>
</dbReference>
<dbReference type="NCBIfam" id="TIGR00390">
    <property type="entry name" value="hslU"/>
    <property type="match status" value="1"/>
</dbReference>
<dbReference type="NCBIfam" id="NF003544">
    <property type="entry name" value="PRK05201.1"/>
    <property type="match status" value="1"/>
</dbReference>
<dbReference type="PANTHER" id="PTHR48102">
    <property type="entry name" value="ATP-DEPENDENT CLP PROTEASE ATP-BINDING SUBUNIT CLPX-LIKE, MITOCHONDRIAL-RELATED"/>
    <property type="match status" value="1"/>
</dbReference>
<dbReference type="PANTHER" id="PTHR48102:SF3">
    <property type="entry name" value="ATP-DEPENDENT PROTEASE ATPASE SUBUNIT HSLU"/>
    <property type="match status" value="1"/>
</dbReference>
<dbReference type="Pfam" id="PF00004">
    <property type="entry name" value="AAA"/>
    <property type="match status" value="1"/>
</dbReference>
<dbReference type="Pfam" id="PF07724">
    <property type="entry name" value="AAA_2"/>
    <property type="match status" value="1"/>
</dbReference>
<dbReference type="Pfam" id="PF10431">
    <property type="entry name" value="ClpB_D2-small"/>
    <property type="match status" value="1"/>
</dbReference>
<dbReference type="SMART" id="SM00382">
    <property type="entry name" value="AAA"/>
    <property type="match status" value="1"/>
</dbReference>
<dbReference type="SMART" id="SM01086">
    <property type="entry name" value="ClpB_D2-small"/>
    <property type="match status" value="1"/>
</dbReference>
<dbReference type="SUPFAM" id="SSF52540">
    <property type="entry name" value="P-loop containing nucleoside triphosphate hydrolases"/>
    <property type="match status" value="1"/>
</dbReference>
<name>HSLU_STAAR</name>
<protein>
    <recommendedName>
        <fullName evidence="1">ATP-dependent protease ATPase subunit HslU</fullName>
    </recommendedName>
    <alternativeName>
        <fullName evidence="1">Unfoldase HslU</fullName>
    </alternativeName>
</protein>
<organism>
    <name type="scientific">Staphylococcus aureus (strain MRSA252)</name>
    <dbReference type="NCBI Taxonomy" id="282458"/>
    <lineage>
        <taxon>Bacteria</taxon>
        <taxon>Bacillati</taxon>
        <taxon>Bacillota</taxon>
        <taxon>Bacilli</taxon>
        <taxon>Bacillales</taxon>
        <taxon>Staphylococcaceae</taxon>
        <taxon>Staphylococcus</taxon>
    </lineage>
</organism>
<accession>Q6GHI1</accession>
<proteinExistence type="inferred from homology"/>
<gene>
    <name evidence="1" type="primary">hslU</name>
    <name type="ordered locus">SAR1230</name>
</gene>
<evidence type="ECO:0000255" key="1">
    <source>
        <dbReference type="HAMAP-Rule" id="MF_00249"/>
    </source>
</evidence>
<evidence type="ECO:0000256" key="2">
    <source>
        <dbReference type="SAM" id="MobiDB-lite"/>
    </source>
</evidence>
<comment type="function">
    <text evidence="1">ATPase subunit of a proteasome-like degradation complex; this subunit has chaperone activity. The binding of ATP and its subsequent hydrolysis by HslU are essential for unfolding of protein substrates subsequently hydrolyzed by HslV. HslU recognizes the N-terminal part of its protein substrates and unfolds these before they are guided to HslV for hydrolysis.</text>
</comment>
<comment type="subunit">
    <text evidence="1">A double ring-shaped homohexamer of HslV is capped on each side by a ring-shaped HslU homohexamer. The assembly of the HslU/HslV complex is dependent on binding of ATP.</text>
</comment>
<comment type="subcellular location">
    <subcellularLocation>
        <location evidence="1">Cytoplasm</location>
    </subcellularLocation>
</comment>
<comment type="similarity">
    <text evidence="1">Belongs to the ClpX chaperone family. HslU subfamily.</text>
</comment>
<reference key="1">
    <citation type="journal article" date="2004" name="Proc. Natl. Acad. Sci. U.S.A.">
        <title>Complete genomes of two clinical Staphylococcus aureus strains: evidence for the rapid evolution of virulence and drug resistance.</title>
        <authorList>
            <person name="Holden M.T.G."/>
            <person name="Feil E.J."/>
            <person name="Lindsay J.A."/>
            <person name="Peacock S.J."/>
            <person name="Day N.P.J."/>
            <person name="Enright M.C."/>
            <person name="Foster T.J."/>
            <person name="Moore C.E."/>
            <person name="Hurst L."/>
            <person name="Atkin R."/>
            <person name="Barron A."/>
            <person name="Bason N."/>
            <person name="Bentley S.D."/>
            <person name="Chillingworth C."/>
            <person name="Chillingworth T."/>
            <person name="Churcher C."/>
            <person name="Clark L."/>
            <person name="Corton C."/>
            <person name="Cronin A."/>
            <person name="Doggett J."/>
            <person name="Dowd L."/>
            <person name="Feltwell T."/>
            <person name="Hance Z."/>
            <person name="Harris B."/>
            <person name="Hauser H."/>
            <person name="Holroyd S."/>
            <person name="Jagels K."/>
            <person name="James K.D."/>
            <person name="Lennard N."/>
            <person name="Line A."/>
            <person name="Mayes R."/>
            <person name="Moule S."/>
            <person name="Mungall K."/>
            <person name="Ormond D."/>
            <person name="Quail M.A."/>
            <person name="Rabbinowitsch E."/>
            <person name="Rutherford K.M."/>
            <person name="Sanders M."/>
            <person name="Sharp S."/>
            <person name="Simmonds M."/>
            <person name="Stevens K."/>
            <person name="Whitehead S."/>
            <person name="Barrell B.G."/>
            <person name="Spratt B.G."/>
            <person name="Parkhill J."/>
        </authorList>
    </citation>
    <scope>NUCLEOTIDE SEQUENCE [LARGE SCALE GENOMIC DNA]</scope>
    <source>
        <strain>MRSA252</strain>
    </source>
</reference>